<reference key="1">
    <citation type="journal article" date="2005" name="Science">
        <title>The genome of the basidiomycetous yeast and human pathogen Cryptococcus neoformans.</title>
        <authorList>
            <person name="Loftus B.J."/>
            <person name="Fung E."/>
            <person name="Roncaglia P."/>
            <person name="Rowley D."/>
            <person name="Amedeo P."/>
            <person name="Bruno D."/>
            <person name="Vamathevan J."/>
            <person name="Miranda M."/>
            <person name="Anderson I.J."/>
            <person name="Fraser J.A."/>
            <person name="Allen J.E."/>
            <person name="Bosdet I.E."/>
            <person name="Brent M.R."/>
            <person name="Chiu R."/>
            <person name="Doering T.L."/>
            <person name="Donlin M.J."/>
            <person name="D'Souza C.A."/>
            <person name="Fox D.S."/>
            <person name="Grinberg V."/>
            <person name="Fu J."/>
            <person name="Fukushima M."/>
            <person name="Haas B.J."/>
            <person name="Huang J.C."/>
            <person name="Janbon G."/>
            <person name="Jones S.J.M."/>
            <person name="Koo H.L."/>
            <person name="Krzywinski M.I."/>
            <person name="Kwon-Chung K.J."/>
            <person name="Lengeler K.B."/>
            <person name="Maiti R."/>
            <person name="Marra M.A."/>
            <person name="Marra R.E."/>
            <person name="Mathewson C.A."/>
            <person name="Mitchell T.G."/>
            <person name="Pertea M."/>
            <person name="Riggs F.R."/>
            <person name="Salzberg S.L."/>
            <person name="Schein J.E."/>
            <person name="Shvartsbeyn A."/>
            <person name="Shin H."/>
            <person name="Shumway M."/>
            <person name="Specht C.A."/>
            <person name="Suh B.B."/>
            <person name="Tenney A."/>
            <person name="Utterback T.R."/>
            <person name="Wickes B.L."/>
            <person name="Wortman J.R."/>
            <person name="Wye N.H."/>
            <person name="Kronstad J.W."/>
            <person name="Lodge J.K."/>
            <person name="Heitman J."/>
            <person name="Davis R.W."/>
            <person name="Fraser C.M."/>
            <person name="Hyman R.W."/>
        </authorList>
    </citation>
    <scope>NUCLEOTIDE SEQUENCE [LARGE SCALE GENOMIC DNA]</scope>
    <source>
        <strain>B-3501A</strain>
    </source>
</reference>
<feature type="chain" id="PRO_0000410117" description="Non-histone chromosomal protein 6">
    <location>
        <begin position="1"/>
        <end position="116"/>
    </location>
</feature>
<feature type="DNA-binding region" description="HMG box" evidence="2">
    <location>
        <begin position="28"/>
        <end position="96"/>
    </location>
</feature>
<feature type="region of interest" description="Disordered" evidence="3">
    <location>
        <begin position="1"/>
        <end position="32"/>
    </location>
</feature>
<feature type="region of interest" description="Disordered" evidence="3">
    <location>
        <begin position="68"/>
        <end position="116"/>
    </location>
</feature>
<feature type="compositionally biased region" description="Basic and acidic residues" evidence="3">
    <location>
        <begin position="1"/>
        <end position="27"/>
    </location>
</feature>
<feature type="compositionally biased region" description="Basic and acidic residues" evidence="3">
    <location>
        <begin position="68"/>
        <end position="109"/>
    </location>
</feature>
<keyword id="KW-0158">Chromosome</keyword>
<keyword id="KW-0227">DNA damage</keyword>
<keyword id="KW-0234">DNA repair</keyword>
<keyword id="KW-0238">DNA-binding</keyword>
<keyword id="KW-0539">Nucleus</keyword>
<keyword id="KW-0804">Transcription</keyword>
<keyword id="KW-0805">Transcription regulation</keyword>
<sequence length="116" mass="13250">MPKVSTKDSKKSTASDAKKRTKKDPNKPKRALSAYMFFVQDYRERIKTENPEATFGDVGKLLGIKWREMNENEKKPYEAKAKADKERADRENADYKAEGKASKKAAKADEESDDDE</sequence>
<dbReference type="EMBL" id="AAEY01000030">
    <property type="protein sequence ID" value="EAL20205.1"/>
    <property type="molecule type" value="Genomic_DNA"/>
</dbReference>
<dbReference type="RefSeq" id="XP_774852.1">
    <property type="nucleotide sequence ID" value="XM_769759.1"/>
</dbReference>
<dbReference type="SMR" id="P0CO25"/>
<dbReference type="EnsemblFungi" id="AAW44308">
    <property type="protein sequence ID" value="AAW44308"/>
    <property type="gene ID" value="CNF04730"/>
</dbReference>
<dbReference type="GeneID" id="4936569"/>
<dbReference type="KEGG" id="cnb:CNBF0170"/>
<dbReference type="VEuPathDB" id="FungiDB:CNBF0170"/>
<dbReference type="HOGENOM" id="CLU_082854_10_0_1"/>
<dbReference type="OrthoDB" id="9523at5206"/>
<dbReference type="GO" id="GO:0005694">
    <property type="term" value="C:chromosome"/>
    <property type="evidence" value="ECO:0007669"/>
    <property type="project" value="UniProtKB-SubCell"/>
</dbReference>
<dbReference type="GO" id="GO:0005634">
    <property type="term" value="C:nucleus"/>
    <property type="evidence" value="ECO:0007669"/>
    <property type="project" value="UniProtKB-SubCell"/>
</dbReference>
<dbReference type="GO" id="GO:0003677">
    <property type="term" value="F:DNA binding"/>
    <property type="evidence" value="ECO:0007669"/>
    <property type="project" value="UniProtKB-KW"/>
</dbReference>
<dbReference type="GO" id="GO:0006281">
    <property type="term" value="P:DNA repair"/>
    <property type="evidence" value="ECO:0007669"/>
    <property type="project" value="UniProtKB-KW"/>
</dbReference>
<dbReference type="CDD" id="cd01390">
    <property type="entry name" value="HMG-box_NHP6-like"/>
    <property type="match status" value="1"/>
</dbReference>
<dbReference type="FunFam" id="1.10.30.10:FF:000016">
    <property type="entry name" value="FACT complex subunit SSRP1"/>
    <property type="match status" value="1"/>
</dbReference>
<dbReference type="Gene3D" id="1.10.30.10">
    <property type="entry name" value="High mobility group box domain"/>
    <property type="match status" value="1"/>
</dbReference>
<dbReference type="InterPro" id="IPR009071">
    <property type="entry name" value="HMG_box_dom"/>
</dbReference>
<dbReference type="InterPro" id="IPR036910">
    <property type="entry name" value="HMG_box_dom_sf"/>
</dbReference>
<dbReference type="InterPro" id="IPR050342">
    <property type="entry name" value="HMGB"/>
</dbReference>
<dbReference type="PANTHER" id="PTHR48112">
    <property type="entry name" value="HIGH MOBILITY GROUP PROTEIN DSP1"/>
    <property type="match status" value="1"/>
</dbReference>
<dbReference type="PANTHER" id="PTHR48112:SF22">
    <property type="entry name" value="MITOCHONDRIAL TRANSCRIPTION FACTOR A, ISOFORM B"/>
    <property type="match status" value="1"/>
</dbReference>
<dbReference type="Pfam" id="PF00505">
    <property type="entry name" value="HMG_box"/>
    <property type="match status" value="1"/>
</dbReference>
<dbReference type="SMART" id="SM00398">
    <property type="entry name" value="HMG"/>
    <property type="match status" value="1"/>
</dbReference>
<dbReference type="SUPFAM" id="SSF47095">
    <property type="entry name" value="HMG-box"/>
    <property type="match status" value="1"/>
</dbReference>
<dbReference type="PROSITE" id="PS50118">
    <property type="entry name" value="HMG_BOX_2"/>
    <property type="match status" value="1"/>
</dbReference>
<organism>
    <name type="scientific">Cryptococcus neoformans var. neoformans serotype D (strain B-3501A)</name>
    <name type="common">Filobasidiella neoformans</name>
    <dbReference type="NCBI Taxonomy" id="283643"/>
    <lineage>
        <taxon>Eukaryota</taxon>
        <taxon>Fungi</taxon>
        <taxon>Dikarya</taxon>
        <taxon>Basidiomycota</taxon>
        <taxon>Agaricomycotina</taxon>
        <taxon>Tremellomycetes</taxon>
        <taxon>Tremellales</taxon>
        <taxon>Cryptococcaceae</taxon>
        <taxon>Cryptococcus</taxon>
        <taxon>Cryptococcus neoformans species complex</taxon>
    </lineage>
</organism>
<accession>P0CO25</accession>
<accession>Q55RH4</accession>
<accession>Q5KEP6</accession>
<name>NHP6_CRYNB</name>
<evidence type="ECO:0000250" key="1"/>
<evidence type="ECO:0000255" key="2">
    <source>
        <dbReference type="PROSITE-ProRule" id="PRU00267"/>
    </source>
</evidence>
<evidence type="ECO:0000256" key="3">
    <source>
        <dbReference type="SAM" id="MobiDB-lite"/>
    </source>
</evidence>
<evidence type="ECO:0000305" key="4"/>
<protein>
    <recommendedName>
        <fullName>Non-histone chromosomal protein 6</fullName>
    </recommendedName>
</protein>
<proteinExistence type="inferred from homology"/>
<comment type="function">
    <text evidence="1">DNA-binding protein that induces severe bending of DNA. Required for DNA-binding by the FACT complex, a general chromatin factor that acts to reorganize nucleosomes. The FACT complex is involved in multiple processes that require DNA as a template such as mRNA elongation, DNA replication and DNA repair. Also augments the fidelity of transcription by RNA polymerase III independently of any role in the FACT complex (By similarity).</text>
</comment>
<comment type="subunit">
    <text evidence="1">Weakly associates with the stable SPT16-POB3 heterodimer to form the FACT complex.</text>
</comment>
<comment type="subcellular location">
    <subcellularLocation>
        <location evidence="2">Nucleus</location>
    </subcellularLocation>
    <subcellularLocation>
        <location evidence="1">Chromosome</location>
    </subcellularLocation>
</comment>
<comment type="similarity">
    <text evidence="4">Belongs to the NHP6 family.</text>
</comment>
<gene>
    <name type="primary">NHP6</name>
    <name type="ordered locus">CNBF0170</name>
</gene>